<feature type="transit peptide" description="Mitochondrion" evidence="2">
    <location>
        <begin position="1"/>
        <end position="18"/>
    </location>
</feature>
<feature type="chain" id="PRO_0000407974" description="Required for respiratory growth protein 9, mitochondrial">
    <location>
        <begin position="19"/>
        <end position="214"/>
    </location>
</feature>
<dbReference type="EMBL" id="FN393086">
    <property type="protein sequence ID" value="CAY82392.1"/>
    <property type="molecule type" value="Genomic_DNA"/>
</dbReference>
<dbReference type="SMR" id="C8ZG19"/>
<dbReference type="HOGENOM" id="CLU_100293_0_0_1"/>
<dbReference type="OrthoDB" id="6673at4893"/>
<dbReference type="Proteomes" id="UP000000286">
    <property type="component" value="Chromosome XIV, Scaffold EC1118_1N9"/>
</dbReference>
<dbReference type="GO" id="GO:0005739">
    <property type="term" value="C:mitochondrion"/>
    <property type="evidence" value="ECO:0007669"/>
    <property type="project" value="UniProtKB-SubCell"/>
</dbReference>
<dbReference type="GO" id="GO:0005634">
    <property type="term" value="C:nucleus"/>
    <property type="evidence" value="ECO:0007669"/>
    <property type="project" value="TreeGrafter"/>
</dbReference>
<dbReference type="InterPro" id="IPR010487">
    <property type="entry name" value="NGRN/Rrg9"/>
</dbReference>
<dbReference type="PANTHER" id="PTHR13475">
    <property type="entry name" value="NEUGRIN"/>
    <property type="match status" value="1"/>
</dbReference>
<dbReference type="PANTHER" id="PTHR13475:SF3">
    <property type="entry name" value="NEUGRIN"/>
    <property type="match status" value="1"/>
</dbReference>
<dbReference type="Pfam" id="PF06413">
    <property type="entry name" value="Neugrin"/>
    <property type="match status" value="1"/>
</dbReference>
<evidence type="ECO:0000250" key="1"/>
<evidence type="ECO:0000255" key="2"/>
<evidence type="ECO:0000305" key="3"/>
<gene>
    <name type="primary">RRG9</name>
    <name type="ORF">EC1118_1N9_1321g</name>
</gene>
<accession>C8ZG19</accession>
<comment type="function">
    <text evidence="1">Required for respiratory activity and maintenance and expression of the mitochondrial genome.</text>
</comment>
<comment type="subcellular location">
    <subcellularLocation>
        <location evidence="1">Mitochondrion</location>
    </subcellularLocation>
</comment>
<comment type="similarity">
    <text evidence="3">Belongs to the RRG9 family.</text>
</comment>
<proteinExistence type="inferred from homology"/>
<reference key="1">
    <citation type="journal article" date="2009" name="Proc. Natl. Acad. Sci. U.S.A.">
        <title>Eukaryote-to-eukaryote gene transfer events revealed by the genome sequence of the wine yeast Saccharomyces cerevisiae EC1118.</title>
        <authorList>
            <person name="Novo M."/>
            <person name="Bigey F."/>
            <person name="Beyne E."/>
            <person name="Galeote V."/>
            <person name="Gavory F."/>
            <person name="Mallet S."/>
            <person name="Cambon B."/>
            <person name="Legras J.-L."/>
            <person name="Wincker P."/>
            <person name="Casaregola S."/>
            <person name="Dequin S."/>
        </authorList>
    </citation>
    <scope>NUCLEOTIDE SEQUENCE [LARGE SCALE GENOMIC DNA]</scope>
    <source>
        <strain>Lalvin EC1118 / Prise de mousse</strain>
    </source>
</reference>
<sequence>MNILRIACRSFHCLRCGPLLNENRGWSSKKIIKLVNKSSLSNKEFTEKVRDGTKDIPEWKKQKMAVRKKLQGQRWNPPKKISQEQMEALRLLKFNFPELTASDLADRFKISPEAVRRILKSNWKRTDEENNNTYERWKRRGERIKEMYQRKEDADFVSNQIVTSRKIILGSNSNSPELIARNVRTFKPFKPNNSTPEKKNTNKLYILKHLGSKQ</sequence>
<organism>
    <name type="scientific">Saccharomyces cerevisiae (strain Lalvin EC1118 / Prise de mousse)</name>
    <name type="common">Baker's yeast</name>
    <dbReference type="NCBI Taxonomy" id="643680"/>
    <lineage>
        <taxon>Eukaryota</taxon>
        <taxon>Fungi</taxon>
        <taxon>Dikarya</taxon>
        <taxon>Ascomycota</taxon>
        <taxon>Saccharomycotina</taxon>
        <taxon>Saccharomycetes</taxon>
        <taxon>Saccharomycetales</taxon>
        <taxon>Saccharomycetaceae</taxon>
        <taxon>Saccharomyces</taxon>
    </lineage>
</organism>
<protein>
    <recommendedName>
        <fullName>Required for respiratory growth protein 9, mitochondrial</fullName>
    </recommendedName>
</protein>
<name>RRG9_YEAS8</name>
<keyword id="KW-0496">Mitochondrion</keyword>
<keyword id="KW-0809">Transit peptide</keyword>